<proteinExistence type="inferred from homology"/>
<dbReference type="EC" id="4.2.1.11" evidence="2"/>
<dbReference type="EMBL" id="AE017220">
    <property type="protein sequence ID" value="AAX66792.1"/>
    <property type="molecule type" value="Genomic_DNA"/>
</dbReference>
<dbReference type="RefSeq" id="WP_000036734.1">
    <property type="nucleotide sequence ID" value="NC_006905.1"/>
</dbReference>
<dbReference type="SMR" id="Q57KH0"/>
<dbReference type="GeneID" id="66757270"/>
<dbReference type="KEGG" id="sec:SCH_2886"/>
<dbReference type="HOGENOM" id="CLU_031223_2_1_6"/>
<dbReference type="UniPathway" id="UPA00109">
    <property type="reaction ID" value="UER00187"/>
</dbReference>
<dbReference type="Proteomes" id="UP000000538">
    <property type="component" value="Chromosome"/>
</dbReference>
<dbReference type="GO" id="GO:0009986">
    <property type="term" value="C:cell surface"/>
    <property type="evidence" value="ECO:0007669"/>
    <property type="project" value="UniProtKB-SubCell"/>
</dbReference>
<dbReference type="GO" id="GO:0005576">
    <property type="term" value="C:extracellular region"/>
    <property type="evidence" value="ECO:0007669"/>
    <property type="project" value="UniProtKB-SubCell"/>
</dbReference>
<dbReference type="GO" id="GO:0000015">
    <property type="term" value="C:phosphopyruvate hydratase complex"/>
    <property type="evidence" value="ECO:0007669"/>
    <property type="project" value="InterPro"/>
</dbReference>
<dbReference type="GO" id="GO:0000287">
    <property type="term" value="F:magnesium ion binding"/>
    <property type="evidence" value="ECO:0007669"/>
    <property type="project" value="UniProtKB-UniRule"/>
</dbReference>
<dbReference type="GO" id="GO:0004634">
    <property type="term" value="F:phosphopyruvate hydratase activity"/>
    <property type="evidence" value="ECO:0007669"/>
    <property type="project" value="UniProtKB-UniRule"/>
</dbReference>
<dbReference type="GO" id="GO:0006096">
    <property type="term" value="P:glycolytic process"/>
    <property type="evidence" value="ECO:0007669"/>
    <property type="project" value="UniProtKB-UniRule"/>
</dbReference>
<dbReference type="CDD" id="cd03313">
    <property type="entry name" value="enolase"/>
    <property type="match status" value="1"/>
</dbReference>
<dbReference type="FunFam" id="3.20.20.120:FF:000001">
    <property type="entry name" value="Enolase"/>
    <property type="match status" value="1"/>
</dbReference>
<dbReference type="FunFam" id="3.30.390.10:FF:000001">
    <property type="entry name" value="Enolase"/>
    <property type="match status" value="1"/>
</dbReference>
<dbReference type="Gene3D" id="3.20.20.120">
    <property type="entry name" value="Enolase-like C-terminal domain"/>
    <property type="match status" value="1"/>
</dbReference>
<dbReference type="Gene3D" id="3.30.390.10">
    <property type="entry name" value="Enolase-like, N-terminal domain"/>
    <property type="match status" value="1"/>
</dbReference>
<dbReference type="HAMAP" id="MF_00318">
    <property type="entry name" value="Enolase"/>
    <property type="match status" value="1"/>
</dbReference>
<dbReference type="InterPro" id="IPR000941">
    <property type="entry name" value="Enolase"/>
</dbReference>
<dbReference type="InterPro" id="IPR036849">
    <property type="entry name" value="Enolase-like_C_sf"/>
</dbReference>
<dbReference type="InterPro" id="IPR029017">
    <property type="entry name" value="Enolase-like_N"/>
</dbReference>
<dbReference type="InterPro" id="IPR020810">
    <property type="entry name" value="Enolase_C"/>
</dbReference>
<dbReference type="InterPro" id="IPR020809">
    <property type="entry name" value="Enolase_CS"/>
</dbReference>
<dbReference type="InterPro" id="IPR020811">
    <property type="entry name" value="Enolase_N"/>
</dbReference>
<dbReference type="NCBIfam" id="TIGR01060">
    <property type="entry name" value="eno"/>
    <property type="match status" value="1"/>
</dbReference>
<dbReference type="PANTHER" id="PTHR11902">
    <property type="entry name" value="ENOLASE"/>
    <property type="match status" value="1"/>
</dbReference>
<dbReference type="PANTHER" id="PTHR11902:SF1">
    <property type="entry name" value="ENOLASE"/>
    <property type="match status" value="1"/>
</dbReference>
<dbReference type="Pfam" id="PF00113">
    <property type="entry name" value="Enolase_C"/>
    <property type="match status" value="1"/>
</dbReference>
<dbReference type="Pfam" id="PF03952">
    <property type="entry name" value="Enolase_N"/>
    <property type="match status" value="1"/>
</dbReference>
<dbReference type="PIRSF" id="PIRSF001400">
    <property type="entry name" value="Enolase"/>
    <property type="match status" value="1"/>
</dbReference>
<dbReference type="PRINTS" id="PR00148">
    <property type="entry name" value="ENOLASE"/>
</dbReference>
<dbReference type="SFLD" id="SFLDF00002">
    <property type="entry name" value="enolase"/>
    <property type="match status" value="1"/>
</dbReference>
<dbReference type="SFLD" id="SFLDG00178">
    <property type="entry name" value="enolase"/>
    <property type="match status" value="1"/>
</dbReference>
<dbReference type="SMART" id="SM01192">
    <property type="entry name" value="Enolase_C"/>
    <property type="match status" value="1"/>
</dbReference>
<dbReference type="SMART" id="SM01193">
    <property type="entry name" value="Enolase_N"/>
    <property type="match status" value="1"/>
</dbReference>
<dbReference type="SUPFAM" id="SSF51604">
    <property type="entry name" value="Enolase C-terminal domain-like"/>
    <property type="match status" value="1"/>
</dbReference>
<dbReference type="SUPFAM" id="SSF54826">
    <property type="entry name" value="Enolase N-terminal domain-like"/>
    <property type="match status" value="1"/>
</dbReference>
<dbReference type="PROSITE" id="PS00164">
    <property type="entry name" value="ENOLASE"/>
    <property type="match status" value="1"/>
</dbReference>
<comment type="function">
    <text evidence="2">Catalyzes the reversible conversion of 2-phosphoglycerate (2-PG) into phosphoenolpyruvate (PEP). It is essential for the degradation of carbohydrates via glycolysis.</text>
</comment>
<comment type="catalytic activity">
    <reaction evidence="2">
        <text>(2R)-2-phosphoglycerate = phosphoenolpyruvate + H2O</text>
        <dbReference type="Rhea" id="RHEA:10164"/>
        <dbReference type="ChEBI" id="CHEBI:15377"/>
        <dbReference type="ChEBI" id="CHEBI:58289"/>
        <dbReference type="ChEBI" id="CHEBI:58702"/>
        <dbReference type="EC" id="4.2.1.11"/>
    </reaction>
</comment>
<comment type="cofactor">
    <cofactor evidence="2">
        <name>Mg(2+)</name>
        <dbReference type="ChEBI" id="CHEBI:18420"/>
    </cofactor>
    <text evidence="2">Binds a second Mg(2+) ion via substrate during catalysis.</text>
</comment>
<comment type="pathway">
    <text evidence="2">Carbohydrate degradation; glycolysis; pyruvate from D-glyceraldehyde 3-phosphate: step 4/5.</text>
</comment>
<comment type="subunit">
    <text evidence="2">Component of the RNA degradosome, a multiprotein complex involved in RNA processing and mRNA degradation.</text>
</comment>
<comment type="subcellular location">
    <subcellularLocation>
        <location evidence="2">Cytoplasm</location>
    </subcellularLocation>
    <subcellularLocation>
        <location evidence="2">Secreted</location>
    </subcellularLocation>
    <subcellularLocation>
        <location evidence="2">Cell surface</location>
    </subcellularLocation>
    <text evidence="2">Fractions of enolase are present in both the cytoplasm and on the cell surface.</text>
</comment>
<comment type="similarity">
    <text evidence="2">Belongs to the enolase family.</text>
</comment>
<protein>
    <recommendedName>
        <fullName evidence="2">Enolase</fullName>
        <ecNumber evidence="2">4.2.1.11</ecNumber>
    </recommendedName>
    <alternativeName>
        <fullName evidence="2">2-phospho-D-glycerate hydro-lyase</fullName>
    </alternativeName>
    <alternativeName>
        <fullName evidence="2">2-phosphoglycerate dehydratase</fullName>
    </alternativeName>
</protein>
<reference key="1">
    <citation type="journal article" date="2005" name="Nucleic Acids Res.">
        <title>The genome sequence of Salmonella enterica serovar Choleraesuis, a highly invasive and resistant zoonotic pathogen.</title>
        <authorList>
            <person name="Chiu C.-H."/>
            <person name="Tang P."/>
            <person name="Chu C."/>
            <person name="Hu S."/>
            <person name="Bao Q."/>
            <person name="Yu J."/>
            <person name="Chou Y.-Y."/>
            <person name="Wang H.-S."/>
            <person name="Lee Y.-S."/>
        </authorList>
    </citation>
    <scope>NUCLEOTIDE SEQUENCE [LARGE SCALE GENOMIC DNA]</scope>
    <source>
        <strain>SC-B67</strain>
    </source>
</reference>
<organism>
    <name type="scientific">Salmonella choleraesuis (strain SC-B67)</name>
    <dbReference type="NCBI Taxonomy" id="321314"/>
    <lineage>
        <taxon>Bacteria</taxon>
        <taxon>Pseudomonadati</taxon>
        <taxon>Pseudomonadota</taxon>
        <taxon>Gammaproteobacteria</taxon>
        <taxon>Enterobacterales</taxon>
        <taxon>Enterobacteriaceae</taxon>
        <taxon>Salmonella</taxon>
    </lineage>
</organism>
<keyword id="KW-0963">Cytoplasm</keyword>
<keyword id="KW-0324">Glycolysis</keyword>
<keyword id="KW-0456">Lyase</keyword>
<keyword id="KW-0460">Magnesium</keyword>
<keyword id="KW-0479">Metal-binding</keyword>
<keyword id="KW-0964">Secreted</keyword>
<evidence type="ECO:0000250" key="1"/>
<evidence type="ECO:0000255" key="2">
    <source>
        <dbReference type="HAMAP-Rule" id="MF_00318"/>
    </source>
</evidence>
<sequence length="432" mass="45599">MSKIVKVIGREIIDSRGNPTVEAEVHLEGGFVGMAAAPSGASTGSREALELRDGDKSRFLGKGVTKAVGAVNGPIAQAILGKDAKDQAGIDKIMIDLDGTENKSNFGANAILAVSLANAKAAAAAKGMPLYEHIAELNGTPGKYSMPVPMMNIINGGEHADNNVDIQEFMIQPVGAKTVKEAIRMGSEVFHHLAKVLKGKGMNTAVGDEGGYAPNLGSNAEALAVIAEAVKAAGYELGKDITLAMDCAASEFYKDGKYVLAGEGNKAFTSEEFTHFLEELTKQYPIVSIEDGLDESDWDGFAYQTKVLGDKIQLVGDDLFVTNTKILKEGIEKGIANSILIKFNQIGSLTETLAAIKMAKDAGYTAVISHRSGETEDATIADLAVGTAAGQIKTGSMSRSDRVAKYNQLIRIEEALGEKAPYNGRKEIKGQA</sequence>
<gene>
    <name evidence="2" type="primary">eno</name>
    <name type="ordered locus">SCH_2886</name>
</gene>
<name>ENO_SALCH</name>
<accession>Q57KH0</accession>
<feature type="initiator methionine" description="Removed" evidence="1">
    <location>
        <position position="1"/>
    </location>
</feature>
<feature type="chain" id="PRO_0000267099" description="Enolase">
    <location>
        <begin position="2"/>
        <end position="432"/>
    </location>
</feature>
<feature type="active site" description="Proton donor" evidence="2">
    <location>
        <position position="209"/>
    </location>
</feature>
<feature type="active site" description="Proton acceptor" evidence="2">
    <location>
        <position position="342"/>
    </location>
</feature>
<feature type="binding site" evidence="2">
    <location>
        <position position="167"/>
    </location>
    <ligand>
        <name>(2R)-2-phosphoglycerate</name>
        <dbReference type="ChEBI" id="CHEBI:58289"/>
    </ligand>
</feature>
<feature type="binding site" evidence="2">
    <location>
        <position position="246"/>
    </location>
    <ligand>
        <name>Mg(2+)</name>
        <dbReference type="ChEBI" id="CHEBI:18420"/>
    </ligand>
</feature>
<feature type="binding site" evidence="2">
    <location>
        <position position="290"/>
    </location>
    <ligand>
        <name>Mg(2+)</name>
        <dbReference type="ChEBI" id="CHEBI:18420"/>
    </ligand>
</feature>
<feature type="binding site" evidence="2">
    <location>
        <position position="317"/>
    </location>
    <ligand>
        <name>Mg(2+)</name>
        <dbReference type="ChEBI" id="CHEBI:18420"/>
    </ligand>
</feature>
<feature type="binding site" evidence="2">
    <location>
        <position position="342"/>
    </location>
    <ligand>
        <name>(2R)-2-phosphoglycerate</name>
        <dbReference type="ChEBI" id="CHEBI:58289"/>
    </ligand>
</feature>
<feature type="binding site" evidence="2">
    <location>
        <position position="371"/>
    </location>
    <ligand>
        <name>(2R)-2-phosphoglycerate</name>
        <dbReference type="ChEBI" id="CHEBI:58289"/>
    </ligand>
</feature>
<feature type="binding site" evidence="2">
    <location>
        <position position="372"/>
    </location>
    <ligand>
        <name>(2R)-2-phosphoglycerate</name>
        <dbReference type="ChEBI" id="CHEBI:58289"/>
    </ligand>
</feature>
<feature type="binding site" evidence="2">
    <location>
        <position position="393"/>
    </location>
    <ligand>
        <name>(2R)-2-phosphoglycerate</name>
        <dbReference type="ChEBI" id="CHEBI:58289"/>
    </ligand>
</feature>